<reference evidence="4" key="1">
    <citation type="submission" date="2004-12" db="UniProtKB">
        <title>Homotarsinin: A novel antimicrobial homodimer peptide from skin secretion of Phyllomedusa tarsius (Amphibia).</title>
        <authorList>
            <person name="Prates M.V."/>
            <person name="Santos N.C.F."/>
            <person name="Leite J.R.S.A."/>
            <person name="Figueredo R.C.R."/>
            <person name="Martins G.R."/>
            <person name="Bloch C. Jr."/>
        </authorList>
    </citation>
    <scope>PROTEIN SEQUENCE</scope>
    <scope>FUNCTION</scope>
    <scope>SUBUNIT</scope>
    <scope>SUBCELLULAR LOCATION</scope>
    <scope>MASS SPECTROMETRY</scope>
    <scope>AMIDATION AT ARG-24</scope>
    <scope>DISULFIDE BOND</scope>
    <source>
        <tissue evidence="3">Skin secretion</tissue>
    </source>
</reference>
<reference evidence="4" key="2">
    <citation type="journal article" date="2017" name="Sci. Rep.">
        <title>Structure and membrane interactions of the homodimeric antibiotic peptide homotarsinin.</title>
        <authorList>
            <person name="Verly R.M."/>
            <person name="Resende J.M."/>
            <person name="Junior E.F."/>
            <person name="de Magalhaes M.T."/>
            <person name="Guimaraes C.F."/>
            <person name="Munhoz V.H."/>
            <person name="Bemquerer M.P."/>
            <person name="Almeida F.C."/>
            <person name="Santoro M.M."/>
            <person name="Pilo-Veloso D."/>
            <person name="Bechinger B."/>
        </authorList>
    </citation>
    <scope>STRUCTURE BY NMR OF 1-24</scope>
    <scope>FUNCTION</scope>
    <scope>SUBUNIT</scope>
    <scope>MUTAGENESIS OF CYS-23</scope>
</reference>
<feature type="peptide" id="PRO_0000440097" description="Homotarsinin" evidence="2">
    <location>
        <begin position="1"/>
        <end position="24"/>
    </location>
</feature>
<feature type="modified residue" description="Arginine amide" evidence="2">
    <location>
        <position position="24"/>
    </location>
</feature>
<feature type="disulfide bond" description="Interchain" evidence="1 2">
    <location>
        <position position="23"/>
    </location>
</feature>
<feature type="mutagenesis site" description="Loss of dimerization." evidence="1">
    <original>C</original>
    <variation>S</variation>
    <location>
        <position position="23"/>
    </location>
</feature>
<feature type="helix" evidence="6">
    <location>
        <begin position="4"/>
        <end position="20"/>
    </location>
</feature>
<keyword id="KW-0002">3D-structure</keyword>
<keyword id="KW-0027">Amidation</keyword>
<keyword id="KW-0878">Amphibian defense peptide</keyword>
<keyword id="KW-0044">Antibiotic</keyword>
<keyword id="KW-0929">Antimicrobial</keyword>
<keyword id="KW-0903">Direct protein sequencing</keyword>
<keyword id="KW-1015">Disulfide bond</keyword>
<keyword id="KW-0964">Secreted</keyword>
<protein>
    <recommendedName>
        <fullName evidence="3">Homotarsinin</fullName>
    </recommendedName>
</protein>
<name>HTRSN_PHYTS</name>
<comment type="function">
    <text evidence="1 2">Antimicrobial peptide (PubMed:28102305, Ref.1). Active against Gram-negative bacteria E.coli ATCC 25922 (MIC=1.5 uM) and P.aeruginosa ATTC 27853 (MIC=23.2 uM) and against Gram-positive bacterium S.aureus ATCC 29313 (MIC=11.6 uM) (PubMed:28102305, Ref.1). Has no hemolytic activity (Ref.1). Associates with and disrupts membranes in vitro (PubMed:28102305).</text>
</comment>
<comment type="subunit">
    <text evidence="1 2">Homodimer; disulfide-linked.</text>
</comment>
<comment type="subcellular location">
    <subcellularLocation>
        <location evidence="2">Secreted</location>
    </subcellularLocation>
</comment>
<comment type="tissue specificity">
    <text evidence="5">Expressed by the skin glands.</text>
</comment>
<comment type="mass spectrometry">
    <text>Homodimer.</text>
</comment>
<sequence>NLVSDIIGSKKHMEKLISIIKKCR</sequence>
<organism>
    <name type="scientific">Phyllomedusa tarsius</name>
    <name type="common">Brownbelly leaf frog</name>
    <name type="synonym">Phyllomedusa tarsia</name>
    <dbReference type="NCBI Taxonomy" id="306084"/>
    <lineage>
        <taxon>Eukaryota</taxon>
        <taxon>Metazoa</taxon>
        <taxon>Chordata</taxon>
        <taxon>Craniata</taxon>
        <taxon>Vertebrata</taxon>
        <taxon>Euteleostomi</taxon>
        <taxon>Amphibia</taxon>
        <taxon>Batrachia</taxon>
        <taxon>Anura</taxon>
        <taxon>Neobatrachia</taxon>
        <taxon>Hyloidea</taxon>
        <taxon>Hylidae</taxon>
        <taxon>Phyllomedusinae</taxon>
        <taxon>Phyllomedusa</taxon>
    </lineage>
</organism>
<evidence type="ECO:0000269" key="1">
    <source>
    </source>
</evidence>
<evidence type="ECO:0000269" key="2">
    <source ref="1"/>
</evidence>
<evidence type="ECO:0000303" key="3">
    <source ref="1"/>
</evidence>
<evidence type="ECO:0000305" key="4"/>
<evidence type="ECO:0000305" key="5">
    <source ref="1"/>
</evidence>
<evidence type="ECO:0007829" key="6">
    <source>
        <dbReference type="PDB" id="6WUX"/>
    </source>
</evidence>
<accession>P84337</accession>
<proteinExistence type="evidence at protein level"/>
<dbReference type="PDB" id="6WUX">
    <property type="method" value="NMR"/>
    <property type="chains" value="A/B=1-24"/>
</dbReference>
<dbReference type="PDB" id="7MN3">
    <property type="method" value="NMR"/>
    <property type="chains" value="A=1-24"/>
</dbReference>
<dbReference type="PDBsum" id="6WUX"/>
<dbReference type="PDBsum" id="7MN3"/>
<dbReference type="SMR" id="P84337"/>
<dbReference type="GO" id="GO:0005576">
    <property type="term" value="C:extracellular region"/>
    <property type="evidence" value="ECO:0007669"/>
    <property type="project" value="UniProtKB-SubCell"/>
</dbReference>
<dbReference type="GO" id="GO:0042742">
    <property type="term" value="P:defense response to bacterium"/>
    <property type="evidence" value="ECO:0007669"/>
    <property type="project" value="UniProtKB-KW"/>
</dbReference>